<evidence type="ECO:0000255" key="1">
    <source>
        <dbReference type="HAMAP-Rule" id="MF_01085"/>
    </source>
</evidence>
<accession>B7LYI8</accession>
<gene>
    <name evidence="1" type="primary">ycjF</name>
    <name type="ordered locus">ECIAI1_1347</name>
</gene>
<reference key="1">
    <citation type="journal article" date="2009" name="PLoS Genet.">
        <title>Organised genome dynamics in the Escherichia coli species results in highly diverse adaptive paths.</title>
        <authorList>
            <person name="Touchon M."/>
            <person name="Hoede C."/>
            <person name="Tenaillon O."/>
            <person name="Barbe V."/>
            <person name="Baeriswyl S."/>
            <person name="Bidet P."/>
            <person name="Bingen E."/>
            <person name="Bonacorsi S."/>
            <person name="Bouchier C."/>
            <person name="Bouvet O."/>
            <person name="Calteau A."/>
            <person name="Chiapello H."/>
            <person name="Clermont O."/>
            <person name="Cruveiller S."/>
            <person name="Danchin A."/>
            <person name="Diard M."/>
            <person name="Dossat C."/>
            <person name="Karoui M.E."/>
            <person name="Frapy E."/>
            <person name="Garry L."/>
            <person name="Ghigo J.M."/>
            <person name="Gilles A.M."/>
            <person name="Johnson J."/>
            <person name="Le Bouguenec C."/>
            <person name="Lescat M."/>
            <person name="Mangenot S."/>
            <person name="Martinez-Jehanne V."/>
            <person name="Matic I."/>
            <person name="Nassif X."/>
            <person name="Oztas S."/>
            <person name="Petit M.A."/>
            <person name="Pichon C."/>
            <person name="Rouy Z."/>
            <person name="Ruf C.S."/>
            <person name="Schneider D."/>
            <person name="Tourret J."/>
            <person name="Vacherie B."/>
            <person name="Vallenet D."/>
            <person name="Medigue C."/>
            <person name="Rocha E.P.C."/>
            <person name="Denamur E."/>
        </authorList>
    </citation>
    <scope>NUCLEOTIDE SEQUENCE [LARGE SCALE GENOMIC DNA]</scope>
    <source>
        <strain>IAI1</strain>
    </source>
</reference>
<name>YCJF_ECO8A</name>
<dbReference type="EMBL" id="CU928160">
    <property type="protein sequence ID" value="CAQ98206.1"/>
    <property type="molecule type" value="Genomic_DNA"/>
</dbReference>
<dbReference type="RefSeq" id="WP_000138717.1">
    <property type="nucleotide sequence ID" value="NC_011741.1"/>
</dbReference>
<dbReference type="SMR" id="B7LYI8"/>
<dbReference type="KEGG" id="ecr:ECIAI1_1347"/>
<dbReference type="HOGENOM" id="CLU_057693_2_0_6"/>
<dbReference type="GO" id="GO:0005886">
    <property type="term" value="C:plasma membrane"/>
    <property type="evidence" value="ECO:0007669"/>
    <property type="project" value="UniProtKB-SubCell"/>
</dbReference>
<dbReference type="HAMAP" id="MF_01085">
    <property type="entry name" value="UPF0283"/>
    <property type="match status" value="1"/>
</dbReference>
<dbReference type="InterPro" id="IPR021147">
    <property type="entry name" value="DUF697"/>
</dbReference>
<dbReference type="InterPro" id="IPR006507">
    <property type="entry name" value="UPF0283"/>
</dbReference>
<dbReference type="NCBIfam" id="TIGR01620">
    <property type="entry name" value="hyp_HI0043"/>
    <property type="match status" value="1"/>
</dbReference>
<dbReference type="PANTHER" id="PTHR39342">
    <property type="entry name" value="UPF0283 MEMBRANE PROTEIN YCJF"/>
    <property type="match status" value="1"/>
</dbReference>
<dbReference type="PANTHER" id="PTHR39342:SF1">
    <property type="entry name" value="UPF0283 MEMBRANE PROTEIN YCJF"/>
    <property type="match status" value="1"/>
</dbReference>
<dbReference type="Pfam" id="PF05128">
    <property type="entry name" value="DUF697"/>
    <property type="match status" value="1"/>
</dbReference>
<keyword id="KW-0997">Cell inner membrane</keyword>
<keyword id="KW-1003">Cell membrane</keyword>
<keyword id="KW-0472">Membrane</keyword>
<keyword id="KW-0812">Transmembrane</keyword>
<keyword id="KW-1133">Transmembrane helix</keyword>
<feature type="chain" id="PRO_1000136883" description="UPF0283 membrane protein YcjF">
    <location>
        <begin position="1"/>
        <end position="353"/>
    </location>
</feature>
<feature type="transmembrane region" description="Helical" evidence="1">
    <location>
        <begin position="70"/>
        <end position="90"/>
    </location>
</feature>
<feature type="transmembrane region" description="Helical" evidence="1">
    <location>
        <begin position="100"/>
        <end position="120"/>
    </location>
</feature>
<feature type="transmembrane region" description="Helical" evidence="1">
    <location>
        <begin position="213"/>
        <end position="233"/>
    </location>
</feature>
<comment type="subcellular location">
    <subcellularLocation>
        <location evidence="1">Cell inner membrane</location>
        <topology evidence="1">Multi-pass membrane protein</topology>
    </subcellularLocation>
</comment>
<comment type="similarity">
    <text evidence="1">Belongs to the UPF0283 family.</text>
</comment>
<protein>
    <recommendedName>
        <fullName evidence="1">UPF0283 membrane protein YcjF</fullName>
    </recommendedName>
</protein>
<proteinExistence type="inferred from homology"/>
<sequence length="353" mass="39361">MTEPLKPRIDFDGPLEVDQNPKFRAQQTFDENQAQNFAPATLDEAPEEEGQVEAVMDAALRPKRSLWRKMVMGGLALFGASVVGQGVQWTMNAWQTQDWVALGGCAAGALIIGAGVGSVVTEWRRLWRLRQRAHERDEARDLLHSHGTGKGRAFCEKLAQQAGIDQSHPALQRWYASIHETQNDREVVSLYAHLVQPVLDAQARREISRSAAESTLMIAVSPLALVDMAFIAWRNLRLINRIATLYGIELGYYSRLRLFKLVLLNIAFAGASELVREVGMDWMSQDLAARLSTRAAQGIGAGLLTARLGIKAMELCRPLPWIDDDKPRLGDFRRQLIGQVKETLQKGKTPSEK</sequence>
<organism>
    <name type="scientific">Escherichia coli O8 (strain IAI1)</name>
    <dbReference type="NCBI Taxonomy" id="585034"/>
    <lineage>
        <taxon>Bacteria</taxon>
        <taxon>Pseudomonadati</taxon>
        <taxon>Pseudomonadota</taxon>
        <taxon>Gammaproteobacteria</taxon>
        <taxon>Enterobacterales</taxon>
        <taxon>Enterobacteriaceae</taxon>
        <taxon>Escherichia</taxon>
    </lineage>
</organism>